<gene>
    <name type="primary">rps19</name>
    <name type="ordered locus">STK_04260</name>
</gene>
<name>RS19_SULTO</name>
<comment type="function">
    <text evidence="1">Protein S19 forms a complex with S13 that binds strongly to the 16S ribosomal RNA.</text>
</comment>
<comment type="similarity">
    <text evidence="2">Belongs to the universal ribosomal protein uS19 family.</text>
</comment>
<organism>
    <name type="scientific">Sulfurisphaera tokodaii (strain DSM 16993 / JCM 10545 / NBRC 100140 / 7)</name>
    <name type="common">Sulfolobus tokodaii</name>
    <dbReference type="NCBI Taxonomy" id="273063"/>
    <lineage>
        <taxon>Archaea</taxon>
        <taxon>Thermoproteota</taxon>
        <taxon>Thermoprotei</taxon>
        <taxon>Sulfolobales</taxon>
        <taxon>Sulfolobaceae</taxon>
        <taxon>Sulfurisphaera</taxon>
    </lineage>
</organism>
<feature type="chain" id="PRO_0000130016" description="Small ribosomal subunit protein uS19">
    <location>
        <begin position="1"/>
        <end position="140"/>
    </location>
</feature>
<reference key="1">
    <citation type="journal article" date="2001" name="DNA Res.">
        <title>Complete genome sequence of an aerobic thermoacidophilic Crenarchaeon, Sulfolobus tokodaii strain7.</title>
        <authorList>
            <person name="Kawarabayasi Y."/>
            <person name="Hino Y."/>
            <person name="Horikawa H."/>
            <person name="Jin-no K."/>
            <person name="Takahashi M."/>
            <person name="Sekine M."/>
            <person name="Baba S."/>
            <person name="Ankai A."/>
            <person name="Kosugi H."/>
            <person name="Hosoyama A."/>
            <person name="Fukui S."/>
            <person name="Nagai Y."/>
            <person name="Nishijima K."/>
            <person name="Otsuka R."/>
            <person name="Nakazawa H."/>
            <person name="Takamiya M."/>
            <person name="Kato Y."/>
            <person name="Yoshizawa T."/>
            <person name="Tanaka T."/>
            <person name="Kudoh Y."/>
            <person name="Yamazaki J."/>
            <person name="Kushida N."/>
            <person name="Oguchi A."/>
            <person name="Aoki K."/>
            <person name="Masuda S."/>
            <person name="Yanagii M."/>
            <person name="Nishimura M."/>
            <person name="Yamagishi A."/>
            <person name="Oshima T."/>
            <person name="Kikuchi H."/>
        </authorList>
    </citation>
    <scope>NUCLEOTIDE SEQUENCE [LARGE SCALE GENOMIC DNA]</scope>
    <source>
        <strain>DSM 16993 / JCM 10545 / NBRC 100140 / 7</strain>
    </source>
</reference>
<proteinExistence type="inferred from homology"/>
<evidence type="ECO:0000250" key="1"/>
<evidence type="ECO:0000305" key="2"/>
<sequence>MSLEIPPEWKKFRYRGKSLDELLNMPMDEFIKLLPSRQRRSLKKGFSDKQRRLLEKIRKYVREGKYSKTIKTHVRDMIILPEMVGLKFAVYNGKEFVEFQVVPEMIGHYLGEFSITTKKVEHGEPGLKATRSSLFLAMKG</sequence>
<protein>
    <recommendedName>
        <fullName evidence="2">Small ribosomal subunit protein uS19</fullName>
    </recommendedName>
    <alternativeName>
        <fullName>30S ribosomal protein S19</fullName>
    </alternativeName>
</protein>
<accession>Q975I5</accession>
<dbReference type="EMBL" id="BA000023">
    <property type="protein sequence ID" value="BAB65415.1"/>
    <property type="molecule type" value="Genomic_DNA"/>
</dbReference>
<dbReference type="RefSeq" id="WP_010978398.1">
    <property type="nucleotide sequence ID" value="NC_003106.2"/>
</dbReference>
<dbReference type="SMR" id="Q975I5"/>
<dbReference type="STRING" id="273063.STK_04260"/>
<dbReference type="KEGG" id="sto:STK_04260"/>
<dbReference type="PATRIC" id="fig|273063.9.peg.496"/>
<dbReference type="eggNOG" id="arCOG04099">
    <property type="taxonomic scope" value="Archaea"/>
</dbReference>
<dbReference type="OrthoDB" id="30559at2157"/>
<dbReference type="Proteomes" id="UP000001015">
    <property type="component" value="Chromosome"/>
</dbReference>
<dbReference type="GO" id="GO:0022627">
    <property type="term" value="C:cytosolic small ribosomal subunit"/>
    <property type="evidence" value="ECO:0007669"/>
    <property type="project" value="TreeGrafter"/>
</dbReference>
<dbReference type="GO" id="GO:0019843">
    <property type="term" value="F:rRNA binding"/>
    <property type="evidence" value="ECO:0007669"/>
    <property type="project" value="UniProtKB-UniRule"/>
</dbReference>
<dbReference type="GO" id="GO:0003735">
    <property type="term" value="F:structural constituent of ribosome"/>
    <property type="evidence" value="ECO:0007669"/>
    <property type="project" value="InterPro"/>
</dbReference>
<dbReference type="GO" id="GO:0000028">
    <property type="term" value="P:ribosomal small subunit assembly"/>
    <property type="evidence" value="ECO:0007669"/>
    <property type="project" value="TreeGrafter"/>
</dbReference>
<dbReference type="GO" id="GO:0006412">
    <property type="term" value="P:translation"/>
    <property type="evidence" value="ECO:0007669"/>
    <property type="project" value="UniProtKB-UniRule"/>
</dbReference>
<dbReference type="FunFam" id="3.30.860.10:FF:000002">
    <property type="entry name" value="40S ribosomal protein S15"/>
    <property type="match status" value="1"/>
</dbReference>
<dbReference type="Gene3D" id="3.30.860.10">
    <property type="entry name" value="30s Ribosomal Protein S19, Chain A"/>
    <property type="match status" value="1"/>
</dbReference>
<dbReference type="HAMAP" id="MF_00531">
    <property type="entry name" value="Ribosomal_uS19"/>
    <property type="match status" value="1"/>
</dbReference>
<dbReference type="InterPro" id="IPR002222">
    <property type="entry name" value="Ribosomal_uS19"/>
</dbReference>
<dbReference type="InterPro" id="IPR020934">
    <property type="entry name" value="Ribosomal_uS19_CS"/>
</dbReference>
<dbReference type="InterPro" id="IPR005713">
    <property type="entry name" value="Ribosomal_uS19_euk/arc"/>
</dbReference>
<dbReference type="InterPro" id="IPR023575">
    <property type="entry name" value="Ribosomal_uS19_SF"/>
</dbReference>
<dbReference type="NCBIfam" id="NF003121">
    <property type="entry name" value="PRK04038.1"/>
    <property type="match status" value="1"/>
</dbReference>
<dbReference type="NCBIfam" id="TIGR01025">
    <property type="entry name" value="uS19_arch"/>
    <property type="match status" value="1"/>
</dbReference>
<dbReference type="PANTHER" id="PTHR11880">
    <property type="entry name" value="RIBOSOMAL PROTEIN S19P FAMILY MEMBER"/>
    <property type="match status" value="1"/>
</dbReference>
<dbReference type="PANTHER" id="PTHR11880:SF2">
    <property type="entry name" value="SMALL RIBOSOMAL SUBUNIT PROTEIN US19"/>
    <property type="match status" value="1"/>
</dbReference>
<dbReference type="Pfam" id="PF00203">
    <property type="entry name" value="Ribosomal_S19"/>
    <property type="match status" value="1"/>
</dbReference>
<dbReference type="PIRSF" id="PIRSF002144">
    <property type="entry name" value="Ribosomal_S19"/>
    <property type="match status" value="1"/>
</dbReference>
<dbReference type="PRINTS" id="PR00975">
    <property type="entry name" value="RIBOSOMALS19"/>
</dbReference>
<dbReference type="SUPFAM" id="SSF54570">
    <property type="entry name" value="Ribosomal protein S19"/>
    <property type="match status" value="1"/>
</dbReference>
<dbReference type="PROSITE" id="PS00323">
    <property type="entry name" value="RIBOSOMAL_S19"/>
    <property type="match status" value="1"/>
</dbReference>
<keyword id="KW-1185">Reference proteome</keyword>
<keyword id="KW-0687">Ribonucleoprotein</keyword>
<keyword id="KW-0689">Ribosomal protein</keyword>
<keyword id="KW-0694">RNA-binding</keyword>
<keyword id="KW-0699">rRNA-binding</keyword>